<keyword id="KW-0067">ATP-binding</keyword>
<keyword id="KW-0436">Ligase</keyword>
<keyword id="KW-0547">Nucleotide-binding</keyword>
<keyword id="KW-0648">Protein biosynthesis</keyword>
<protein>
    <recommendedName>
        <fullName evidence="1">Glutamyl-tRNA(Gln) amidotransferase subunit D</fullName>
        <shortName evidence="1">Glu-ADT subunit D</shortName>
        <ecNumber evidence="1">6.3.5.-</ecNumber>
    </recommendedName>
</protein>
<proteinExistence type="inferred from homology"/>
<name>GATD_METM7</name>
<gene>
    <name evidence="1" type="primary">gatD</name>
    <name type="ordered locus">MmarC7_0513</name>
</gene>
<evidence type="ECO:0000255" key="1">
    <source>
        <dbReference type="HAMAP-Rule" id="MF_00586"/>
    </source>
</evidence>
<evidence type="ECO:0000255" key="2">
    <source>
        <dbReference type="PROSITE-ProRule" id="PRU01068"/>
    </source>
</evidence>
<comment type="function">
    <text evidence="1">Allows the formation of correctly charged Gln-tRNA(Gln) through the transamidation of misacylated Glu-tRNA(Gln) in organisms which lack glutaminyl-tRNA synthetase. The reaction takes place in the presence of glutamine and ATP through an activated gamma-phospho-Glu-tRNA(Gln). The GatDE system is specific for glutamate and does not act on aspartate.</text>
</comment>
<comment type="catalytic activity">
    <reaction evidence="1">
        <text>L-glutamyl-tRNA(Gln) + L-glutamine + ATP + H2O = L-glutaminyl-tRNA(Gln) + L-glutamate + ADP + phosphate + H(+)</text>
        <dbReference type="Rhea" id="RHEA:17521"/>
        <dbReference type="Rhea" id="RHEA-COMP:9681"/>
        <dbReference type="Rhea" id="RHEA-COMP:9684"/>
        <dbReference type="ChEBI" id="CHEBI:15377"/>
        <dbReference type="ChEBI" id="CHEBI:15378"/>
        <dbReference type="ChEBI" id="CHEBI:29985"/>
        <dbReference type="ChEBI" id="CHEBI:30616"/>
        <dbReference type="ChEBI" id="CHEBI:43474"/>
        <dbReference type="ChEBI" id="CHEBI:58359"/>
        <dbReference type="ChEBI" id="CHEBI:78520"/>
        <dbReference type="ChEBI" id="CHEBI:78521"/>
        <dbReference type="ChEBI" id="CHEBI:456216"/>
    </reaction>
</comment>
<comment type="subunit">
    <text evidence="1">Heterodimer of GatD and GatE.</text>
</comment>
<comment type="similarity">
    <text evidence="1">Belongs to the asparaginase 1 family. GatD subfamily.</text>
</comment>
<organism>
    <name type="scientific">Methanococcus maripaludis (strain C7 / ATCC BAA-1331)</name>
    <dbReference type="NCBI Taxonomy" id="426368"/>
    <lineage>
        <taxon>Archaea</taxon>
        <taxon>Methanobacteriati</taxon>
        <taxon>Methanobacteriota</taxon>
        <taxon>Methanomada group</taxon>
        <taxon>Methanococci</taxon>
        <taxon>Methanococcales</taxon>
        <taxon>Methanococcaceae</taxon>
        <taxon>Methanococcus</taxon>
    </lineage>
</organism>
<reference key="1">
    <citation type="submission" date="2007-06" db="EMBL/GenBank/DDBJ databases">
        <title>Complete sequence of Methanococcus maripaludis C7.</title>
        <authorList>
            <consortium name="US DOE Joint Genome Institute"/>
            <person name="Copeland A."/>
            <person name="Lucas S."/>
            <person name="Lapidus A."/>
            <person name="Barry K."/>
            <person name="Glavina del Rio T."/>
            <person name="Dalin E."/>
            <person name="Tice H."/>
            <person name="Pitluck S."/>
            <person name="Clum A."/>
            <person name="Schmutz J."/>
            <person name="Larimer F."/>
            <person name="Land M."/>
            <person name="Hauser L."/>
            <person name="Kyrpides N."/>
            <person name="Anderson I."/>
            <person name="Sieprawska-Lupa M."/>
            <person name="Whitman W.B."/>
            <person name="Richardson P."/>
        </authorList>
    </citation>
    <scope>NUCLEOTIDE SEQUENCE [LARGE SCALE GENOMIC DNA]</scope>
    <source>
        <strain>C7 / ATCC BAA-1331</strain>
    </source>
</reference>
<sequence length="418" mass="46050">MDIGDFVKLKLENTTYSGTVMPSLNEDTIVIKMKSGYNVGIDKNKIKNIEILESGDKPKYGLPPLNLEKNPKLKNISILSTGGTVASRVDYKTGAVHPAFTADDLIMAVPELLDIANIKGKVILNILSENMLPKYWVMTAEAIKEEIENGAEGIVIAHGTDTMHYTASALSFMVNSEVPIILVGAQRSSDRPSSDAALNIISAVKAATEPIKGVYVLMHGETGDTVCHLHEGTKVRKLHSSRRDAFKSVNKTPFAEINPFTKEVKYLRDVKNQDKSKIKEIVLNTNLEEKVALIKVYPGIDSEILKFYVDKGYKGIILEGTGLGHTPETFFEGIDYANENNVLVAMTTQTINGRVNMNVYSNGRELQAKGVIPCEDMLSEVAFVKLMYLLGNYEIEDAKELMSKDIAGEINESINLEC</sequence>
<accession>A6VGK5</accession>
<dbReference type="EC" id="6.3.5.-" evidence="1"/>
<dbReference type="EMBL" id="CP000745">
    <property type="protein sequence ID" value="ABR65581.1"/>
    <property type="molecule type" value="Genomic_DNA"/>
</dbReference>
<dbReference type="SMR" id="A6VGK5"/>
<dbReference type="STRING" id="426368.MmarC7_0513"/>
<dbReference type="KEGG" id="mmz:MmarC7_0513"/>
<dbReference type="eggNOG" id="arCOG01924">
    <property type="taxonomic scope" value="Archaea"/>
</dbReference>
<dbReference type="HOGENOM" id="CLU_019134_2_1_2"/>
<dbReference type="OrthoDB" id="371959at2157"/>
<dbReference type="GO" id="GO:0004067">
    <property type="term" value="F:asparaginase activity"/>
    <property type="evidence" value="ECO:0007669"/>
    <property type="project" value="InterPro"/>
</dbReference>
<dbReference type="GO" id="GO:0005524">
    <property type="term" value="F:ATP binding"/>
    <property type="evidence" value="ECO:0007669"/>
    <property type="project" value="UniProtKB-KW"/>
</dbReference>
<dbReference type="GO" id="GO:0050567">
    <property type="term" value="F:glutaminyl-tRNA synthase (glutamine-hydrolyzing) activity"/>
    <property type="evidence" value="ECO:0007669"/>
    <property type="project" value="UniProtKB-UniRule"/>
</dbReference>
<dbReference type="GO" id="GO:0006520">
    <property type="term" value="P:amino acid metabolic process"/>
    <property type="evidence" value="ECO:0007669"/>
    <property type="project" value="InterPro"/>
</dbReference>
<dbReference type="GO" id="GO:0006450">
    <property type="term" value="P:regulation of translational fidelity"/>
    <property type="evidence" value="ECO:0007669"/>
    <property type="project" value="InterPro"/>
</dbReference>
<dbReference type="GO" id="GO:0006412">
    <property type="term" value="P:translation"/>
    <property type="evidence" value="ECO:0007669"/>
    <property type="project" value="UniProtKB-UniRule"/>
</dbReference>
<dbReference type="CDD" id="cd08962">
    <property type="entry name" value="GatD"/>
    <property type="match status" value="1"/>
</dbReference>
<dbReference type="FunFam" id="3.40.50.1170:FF:000001">
    <property type="entry name" value="L-asparaginase 2"/>
    <property type="match status" value="1"/>
</dbReference>
<dbReference type="Gene3D" id="2.30.30.520">
    <property type="match status" value="1"/>
</dbReference>
<dbReference type="Gene3D" id="3.40.50.40">
    <property type="match status" value="1"/>
</dbReference>
<dbReference type="Gene3D" id="3.40.50.1170">
    <property type="entry name" value="L-asparaginase, N-terminal domain"/>
    <property type="match status" value="1"/>
</dbReference>
<dbReference type="HAMAP" id="MF_00586">
    <property type="entry name" value="GatD"/>
    <property type="match status" value="1"/>
</dbReference>
<dbReference type="InterPro" id="IPR006033">
    <property type="entry name" value="AsnA_fam"/>
</dbReference>
<dbReference type="InterPro" id="IPR036152">
    <property type="entry name" value="Asp/glu_Ase-like_sf"/>
</dbReference>
<dbReference type="InterPro" id="IPR006034">
    <property type="entry name" value="Asparaginase/glutaminase-like"/>
</dbReference>
<dbReference type="InterPro" id="IPR020827">
    <property type="entry name" value="Asparaginase/glutaminase_AS1"/>
</dbReference>
<dbReference type="InterPro" id="IPR027475">
    <property type="entry name" value="Asparaginase/glutaminase_AS2"/>
</dbReference>
<dbReference type="InterPro" id="IPR040919">
    <property type="entry name" value="Asparaginase_C"/>
</dbReference>
<dbReference type="InterPro" id="IPR011878">
    <property type="entry name" value="GatD"/>
</dbReference>
<dbReference type="InterPro" id="IPR040918">
    <property type="entry name" value="GatD_N"/>
</dbReference>
<dbReference type="InterPro" id="IPR037222">
    <property type="entry name" value="GatD_N_sf"/>
</dbReference>
<dbReference type="InterPro" id="IPR027473">
    <property type="entry name" value="L-asparaginase_C"/>
</dbReference>
<dbReference type="InterPro" id="IPR027474">
    <property type="entry name" value="L-asparaginase_N"/>
</dbReference>
<dbReference type="InterPro" id="IPR037152">
    <property type="entry name" value="L-asparaginase_N_sf"/>
</dbReference>
<dbReference type="NCBIfam" id="TIGR00519">
    <property type="entry name" value="asnASE_I"/>
    <property type="match status" value="1"/>
</dbReference>
<dbReference type="NCBIfam" id="TIGR02153">
    <property type="entry name" value="gatD_arch"/>
    <property type="match status" value="1"/>
</dbReference>
<dbReference type="NCBIfam" id="NF003217">
    <property type="entry name" value="PRK04183.1"/>
    <property type="match status" value="1"/>
</dbReference>
<dbReference type="PANTHER" id="PTHR11707:SF28">
    <property type="entry name" value="60 KDA LYSOPHOSPHOLIPASE"/>
    <property type="match status" value="1"/>
</dbReference>
<dbReference type="PANTHER" id="PTHR11707">
    <property type="entry name" value="L-ASPARAGINASE"/>
    <property type="match status" value="1"/>
</dbReference>
<dbReference type="Pfam" id="PF00710">
    <property type="entry name" value="Asparaginase"/>
    <property type="match status" value="1"/>
</dbReference>
<dbReference type="Pfam" id="PF17763">
    <property type="entry name" value="Asparaginase_C"/>
    <property type="match status" value="1"/>
</dbReference>
<dbReference type="Pfam" id="PF18195">
    <property type="entry name" value="GatD_N"/>
    <property type="match status" value="1"/>
</dbReference>
<dbReference type="PIRSF" id="PIRSF500175">
    <property type="entry name" value="Glu_ADT_D"/>
    <property type="match status" value="1"/>
</dbReference>
<dbReference type="PIRSF" id="PIRSF001220">
    <property type="entry name" value="L-ASNase_gatD"/>
    <property type="match status" value="1"/>
</dbReference>
<dbReference type="PRINTS" id="PR00139">
    <property type="entry name" value="ASNGLNASE"/>
</dbReference>
<dbReference type="SMART" id="SM00870">
    <property type="entry name" value="Asparaginase"/>
    <property type="match status" value="1"/>
</dbReference>
<dbReference type="SUPFAM" id="SSF141300">
    <property type="entry name" value="GatD N-terminal domain-like"/>
    <property type="match status" value="1"/>
</dbReference>
<dbReference type="SUPFAM" id="SSF53774">
    <property type="entry name" value="Glutaminase/Asparaginase"/>
    <property type="match status" value="1"/>
</dbReference>
<dbReference type="PROSITE" id="PS00144">
    <property type="entry name" value="ASN_GLN_ASE_1"/>
    <property type="match status" value="1"/>
</dbReference>
<dbReference type="PROSITE" id="PS00917">
    <property type="entry name" value="ASN_GLN_ASE_2"/>
    <property type="match status" value="1"/>
</dbReference>
<dbReference type="PROSITE" id="PS51732">
    <property type="entry name" value="ASN_GLN_ASE_3"/>
    <property type="match status" value="1"/>
</dbReference>
<feature type="chain" id="PRO_1000025458" description="Glutamyl-tRNA(Gln) amidotransferase subunit D">
    <location>
        <begin position="1"/>
        <end position="418"/>
    </location>
</feature>
<feature type="domain" description="Asparaginase/glutaminase" evidence="2">
    <location>
        <begin position="74"/>
        <end position="405"/>
    </location>
</feature>
<feature type="active site" evidence="1">
    <location>
        <position position="84"/>
    </location>
</feature>
<feature type="active site" evidence="1">
    <location>
        <position position="160"/>
    </location>
</feature>
<feature type="active site" evidence="1">
    <location>
        <position position="161"/>
    </location>
</feature>
<feature type="active site" evidence="1">
    <location>
        <position position="237"/>
    </location>
</feature>